<evidence type="ECO:0000255" key="1">
    <source>
        <dbReference type="HAMAP-Rule" id="MF_01506"/>
    </source>
</evidence>
<reference key="1">
    <citation type="journal article" date="2003" name="Nature">
        <title>Genome sequence of Bacillus cereus and comparative analysis with Bacillus anthracis.</title>
        <authorList>
            <person name="Ivanova N."/>
            <person name="Sorokin A."/>
            <person name="Anderson I."/>
            <person name="Galleron N."/>
            <person name="Candelon B."/>
            <person name="Kapatral V."/>
            <person name="Bhattacharyya A."/>
            <person name="Reznik G."/>
            <person name="Mikhailova N."/>
            <person name="Lapidus A."/>
            <person name="Chu L."/>
            <person name="Mazur M."/>
            <person name="Goltsman E."/>
            <person name="Larsen N."/>
            <person name="D'Souza M."/>
            <person name="Walunas T."/>
            <person name="Grechkin Y."/>
            <person name="Pusch G."/>
            <person name="Haselkorn R."/>
            <person name="Fonstein M."/>
            <person name="Ehrlich S.D."/>
            <person name="Overbeek R."/>
            <person name="Kyrpides N.C."/>
        </authorList>
    </citation>
    <scope>NUCLEOTIDE SEQUENCE [LARGE SCALE GENOMIC DNA]</scope>
    <source>
        <strain>ATCC 14579 / DSM 31 / CCUG 7414 / JCM 2152 / NBRC 15305 / NCIMB 9373 / NCTC 2599 / NRRL B-3711</strain>
    </source>
</reference>
<dbReference type="EMBL" id="AE016877">
    <property type="protein sequence ID" value="AAP10541.1"/>
    <property type="molecule type" value="Genomic_DNA"/>
</dbReference>
<dbReference type="RefSeq" id="NP_833340.1">
    <property type="nucleotide sequence ID" value="NC_004722.1"/>
</dbReference>
<dbReference type="RefSeq" id="WP_001133511.1">
    <property type="nucleotide sequence ID" value="NZ_CP138336.1"/>
</dbReference>
<dbReference type="SMR" id="Q81AG2"/>
<dbReference type="STRING" id="226900.BC_3608"/>
<dbReference type="KEGG" id="bce:BC3608"/>
<dbReference type="PATRIC" id="fig|226900.8.peg.3704"/>
<dbReference type="HOGENOM" id="CLU_178266_1_0_9"/>
<dbReference type="OrthoDB" id="1799076at2"/>
<dbReference type="Proteomes" id="UP000001417">
    <property type="component" value="Chromosome"/>
</dbReference>
<dbReference type="GO" id="GO:0030436">
    <property type="term" value="P:asexual sporulation"/>
    <property type="evidence" value="ECO:0007669"/>
    <property type="project" value="UniProtKB-UniRule"/>
</dbReference>
<dbReference type="GO" id="GO:0030435">
    <property type="term" value="P:sporulation resulting in formation of a cellular spore"/>
    <property type="evidence" value="ECO:0007669"/>
    <property type="project" value="UniProtKB-KW"/>
</dbReference>
<dbReference type="HAMAP" id="MF_01506">
    <property type="entry name" value="Tlp"/>
    <property type="match status" value="1"/>
</dbReference>
<dbReference type="InterPro" id="IPR017524">
    <property type="entry name" value="SASP_thioredoxin-like"/>
</dbReference>
<dbReference type="NCBIfam" id="TIGR03090">
    <property type="entry name" value="SASP_tlp"/>
    <property type="match status" value="1"/>
</dbReference>
<dbReference type="Pfam" id="PF19824">
    <property type="entry name" value="Tlp"/>
    <property type="match status" value="1"/>
</dbReference>
<proteinExistence type="inferred from homology"/>
<comment type="subcellular location">
    <subcellularLocation>
        <location evidence="1">Spore core</location>
    </subcellularLocation>
</comment>
<comment type="induction">
    <text evidence="1">Expressed only in the forespore compartment of sporulating cells.</text>
</comment>
<comment type="similarity">
    <text evidence="1">Belongs to the Tlp family.</text>
</comment>
<protein>
    <recommendedName>
        <fullName evidence="1">Small, acid-soluble spore protein Tlp</fullName>
    </recommendedName>
</protein>
<keyword id="KW-1185">Reference proteome</keyword>
<keyword id="KW-0749">Sporulation</keyword>
<organism>
    <name type="scientific">Bacillus cereus (strain ATCC 14579 / DSM 31 / CCUG 7414 / JCM 2152 / NBRC 15305 / NCIMB 9373 / NCTC 2599 / NRRL B-3711)</name>
    <dbReference type="NCBI Taxonomy" id="226900"/>
    <lineage>
        <taxon>Bacteria</taxon>
        <taxon>Bacillati</taxon>
        <taxon>Bacillota</taxon>
        <taxon>Bacilli</taxon>
        <taxon>Bacillales</taxon>
        <taxon>Bacillaceae</taxon>
        <taxon>Bacillus</taxon>
        <taxon>Bacillus cereus group</taxon>
    </lineage>
</organism>
<name>TLP_BACCR</name>
<accession>Q81AG2</accession>
<sequence>MPNPDNRSDNAEKLQEMVQNTVDNFNEAKETAELSNEKDRAAIEAKNQRRLESIDSLKSEIKDES</sequence>
<feature type="chain" id="PRO_0000221496" description="Small, acid-soluble spore protein Tlp">
    <location>
        <begin position="1"/>
        <end position="65"/>
    </location>
</feature>
<gene>
    <name evidence="1" type="primary">tlp</name>
    <name type="ordered locus">BC_3608</name>
</gene>